<accession>P21867</accession>
<evidence type="ECO:0000255" key="1">
    <source>
        <dbReference type="PROSITE-ProRule" id="PRU00111"/>
    </source>
</evidence>
<evidence type="ECO:0000269" key="2">
    <source>
    </source>
</evidence>
<evidence type="ECO:0000269" key="3">
    <source>
    </source>
</evidence>
<evidence type="ECO:0000303" key="4">
    <source>
    </source>
</evidence>
<evidence type="ECO:0000305" key="5"/>
<dbReference type="EMBL" id="M29849">
    <property type="protein sequence ID" value="AAA24500.1"/>
    <property type="molecule type" value="Genomic_DNA"/>
</dbReference>
<dbReference type="PIR" id="A35160">
    <property type="entry name" value="A35160"/>
</dbReference>
<dbReference type="SMR" id="P21867"/>
<dbReference type="GO" id="GO:0003700">
    <property type="term" value="F:DNA-binding transcription factor activity"/>
    <property type="evidence" value="ECO:0007669"/>
    <property type="project" value="TreeGrafter"/>
</dbReference>
<dbReference type="GO" id="GO:0000976">
    <property type="term" value="F:transcription cis-regulatory region binding"/>
    <property type="evidence" value="ECO:0007669"/>
    <property type="project" value="TreeGrafter"/>
</dbReference>
<dbReference type="CDD" id="cd01392">
    <property type="entry name" value="HTH_LacI"/>
    <property type="match status" value="1"/>
</dbReference>
<dbReference type="CDD" id="cd20010">
    <property type="entry name" value="PBP1_AglR-like"/>
    <property type="match status" value="1"/>
</dbReference>
<dbReference type="Gene3D" id="3.40.50.2300">
    <property type="match status" value="2"/>
</dbReference>
<dbReference type="Gene3D" id="1.10.260.40">
    <property type="entry name" value="lambda repressor-like DNA-binding domains"/>
    <property type="match status" value="1"/>
</dbReference>
<dbReference type="InterPro" id="IPR000843">
    <property type="entry name" value="HTH_LacI"/>
</dbReference>
<dbReference type="InterPro" id="IPR010982">
    <property type="entry name" value="Lambda_DNA-bd_dom_sf"/>
</dbReference>
<dbReference type="InterPro" id="IPR001761">
    <property type="entry name" value="Peripla_BP/Lac1_sug-bd_dom"/>
</dbReference>
<dbReference type="InterPro" id="IPR028082">
    <property type="entry name" value="Peripla_BP_I"/>
</dbReference>
<dbReference type="PANTHER" id="PTHR30146:SF155">
    <property type="entry name" value="ALANINE RACEMASE"/>
    <property type="match status" value="1"/>
</dbReference>
<dbReference type="PANTHER" id="PTHR30146">
    <property type="entry name" value="LACI-RELATED TRANSCRIPTIONAL REPRESSOR"/>
    <property type="match status" value="1"/>
</dbReference>
<dbReference type="Pfam" id="PF00356">
    <property type="entry name" value="LacI"/>
    <property type="match status" value="1"/>
</dbReference>
<dbReference type="Pfam" id="PF00532">
    <property type="entry name" value="Peripla_BP_1"/>
    <property type="match status" value="1"/>
</dbReference>
<dbReference type="SMART" id="SM00354">
    <property type="entry name" value="HTH_LACI"/>
    <property type="match status" value="1"/>
</dbReference>
<dbReference type="SUPFAM" id="SSF47413">
    <property type="entry name" value="lambda repressor-like DNA-binding domains"/>
    <property type="match status" value="1"/>
</dbReference>
<dbReference type="SUPFAM" id="SSF53822">
    <property type="entry name" value="Periplasmic binding protein-like I"/>
    <property type="match status" value="1"/>
</dbReference>
<dbReference type="PROSITE" id="PS50932">
    <property type="entry name" value="HTH_LACI_2"/>
    <property type="match status" value="1"/>
</dbReference>
<gene>
    <name evidence="4" type="primary">rafR</name>
</gene>
<organism>
    <name type="scientific">Escherichia coli</name>
    <dbReference type="NCBI Taxonomy" id="562"/>
    <lineage>
        <taxon>Bacteria</taxon>
        <taxon>Pseudomonadati</taxon>
        <taxon>Pseudomonadota</taxon>
        <taxon>Gammaproteobacteria</taxon>
        <taxon>Enterobacterales</taxon>
        <taxon>Enterobacteriaceae</taxon>
        <taxon>Escherichia</taxon>
    </lineage>
</organism>
<reference key="1">
    <citation type="journal article" date="1990" name="J. Bacteriol.">
        <title>Regulatory elements of the raffinose operon: nucleotide sequences of operator and repressor genes.</title>
        <authorList>
            <person name="Aslanidis C."/>
            <person name="Schmitt R."/>
        </authorList>
    </citation>
    <scope>NUCLEOTIDE SEQUENCE [GENOMIC DNA]</scope>
    <scope>PROTEIN SEQUENCE OF 2-6</scope>
    <scope>FUNCTION</scope>
    <scope>MUTAGENESIS OF ALA-50</scope>
</reference>
<reference key="2">
    <citation type="journal article" date="1994" name="Mol. Gen. Genet.">
        <title>Role of two operators in regulating the plasmid-borne raf operon of Escherichia coli.</title>
        <authorList>
            <person name="Muiznieks I."/>
            <person name="Schmitt R."/>
        </authorList>
    </citation>
    <scope>FUNCTION</scope>
    <scope>SUBUNIT</scope>
</reference>
<comment type="function">
    <text evidence="2 3">Repressor that negatively controls the expression of the raffinose (raf) operon by binding to the raf operator (rafO) DNA (PubMed:2180920, PubMed:8277949). Acts by binding to two operator sites, O1 and 02, which flank the -35 raf promoter box (PubMed:8277949). RafR bound to 02 alone results in 45 % repression of transcription, whereas RafR bound to O1 leads to only 6% repression (PubMed:8277949).</text>
</comment>
<comment type="subunit">
    <text evidence="3">Homodimer.</text>
</comment>
<protein>
    <recommendedName>
        <fullName evidence="5">HTH-type transcriptional regulator RafR</fullName>
    </recommendedName>
    <alternativeName>
        <fullName evidence="5">Raffinose operon repressor</fullName>
        <shortName evidence="4">raf repressor</shortName>
    </alternativeName>
</protein>
<feature type="initiator methionine" description="Removed" evidence="2">
    <location>
        <position position="1"/>
    </location>
</feature>
<feature type="chain" id="PRO_0000107982" description="HTH-type transcriptional regulator RafR">
    <location>
        <begin position="2"/>
        <end position="336"/>
    </location>
</feature>
<feature type="domain" description="HTH lacI-type" evidence="1">
    <location>
        <begin position="2"/>
        <end position="55"/>
    </location>
</feature>
<feature type="DNA-binding region" description="H-T-H motif" evidence="1">
    <location>
        <begin position="3"/>
        <end position="22"/>
    </location>
</feature>
<feature type="mutagenesis site" description="Loss of activity." evidence="2">
    <original>A</original>
    <variation>E</variation>
    <location>
        <position position="50"/>
    </location>
</feature>
<keyword id="KW-0903">Direct protein sequencing</keyword>
<keyword id="KW-0238">DNA-binding</keyword>
<keyword id="KW-0614">Plasmid</keyword>
<keyword id="KW-0678">Repressor</keyword>
<keyword id="KW-0804">Transcription</keyword>
<keyword id="KW-0805">Transcription regulation</keyword>
<proteinExistence type="evidence at protein level"/>
<name>RAFR_ECOLX</name>
<sequence length="336" mass="36774">MSLKAIATTLGISVTTVSRALGGFSDVAASTRERVEAEARRRGYRPNTQARRLKTGKTDAIGLVYPENDVPFNSGVFMDMVSCISRELAYHDIDLLLIADDEHADCHSYMRLVESRRIDALIIAHTLDDDPRITHLHKAGIPFLALGRVPQGLPCAWFDFDNHAGTWQATQKLIALGHKSIALLSENTSHSYVIARRQGWLDALHEHGLKDPLLRLVSPTRRAGYLAVMELMSLPAPPTAIITDNDLSGDGAAMALQLRGRLSGKEAVSLVVYDGLPQDSIIELDVAAVIQSTRSLVGRQISDMVYQIINGASPESLQITWTPIFYPGSTVHSPSF</sequence>
<geneLocation type="plasmid">
    <name>pRSD2</name>
</geneLocation>